<comment type="function">
    <text>Sigma factors are initiation factors that promote the attachment of RNA polymerase to specific initiation sites and are then released.</text>
</comment>
<comment type="similarity">
    <text evidence="2">Belongs to the sigma-54 factor family.</text>
</comment>
<proteinExistence type="inferred from homology"/>
<name>RP54_CLOK5</name>
<evidence type="ECO:0000250" key="1"/>
<evidence type="ECO:0000305" key="2"/>
<reference key="1">
    <citation type="journal article" date="2008" name="Proc. Natl. Acad. Sci. U.S.A.">
        <title>The genome of Clostridium kluyveri, a strict anaerobe with unique metabolic features.</title>
        <authorList>
            <person name="Seedorf H."/>
            <person name="Fricke W.F."/>
            <person name="Veith B."/>
            <person name="Brueggemann H."/>
            <person name="Liesegang H."/>
            <person name="Strittmatter A."/>
            <person name="Miethke M."/>
            <person name="Buckel W."/>
            <person name="Hinderberger J."/>
            <person name="Li F."/>
            <person name="Hagemeier C."/>
            <person name="Thauer R.K."/>
            <person name="Gottschalk G."/>
        </authorList>
    </citation>
    <scope>NUCLEOTIDE SEQUENCE [LARGE SCALE GENOMIC DNA]</scope>
    <source>
        <strain>ATCC 8527 / DSM 555 / NBRC 12016 / NCIMB 10680 / K1</strain>
    </source>
</reference>
<reference key="2">
    <citation type="journal article" date="1996" name="J. Bacteriol.">
        <title>Molecular analysis of the anaerobic succinate degradation pathway in Clostridium kluyveri.</title>
        <authorList>
            <person name="Soehling B."/>
            <person name="Gottschalk G."/>
        </authorList>
    </citation>
    <scope>NUCLEOTIDE SEQUENCE [GENOMIC DNA] OF 1-29</scope>
</reference>
<keyword id="KW-0238">DNA-binding</keyword>
<keyword id="KW-0240">DNA-directed RNA polymerase</keyword>
<keyword id="KW-0548">Nucleotidyltransferase</keyword>
<keyword id="KW-1185">Reference proteome</keyword>
<keyword id="KW-0731">Sigma factor</keyword>
<keyword id="KW-0804">Transcription</keyword>
<keyword id="KW-0805">Transcription regulation</keyword>
<keyword id="KW-0808">Transferase</keyword>
<accession>P38944</accession>
<accession>A5N1M5</accession>
<organism>
    <name type="scientific">Clostridium kluyveri (strain ATCC 8527 / DSM 555 / NBRC 12016 / NCIMB 10680 / K1)</name>
    <dbReference type="NCBI Taxonomy" id="431943"/>
    <lineage>
        <taxon>Bacteria</taxon>
        <taxon>Bacillati</taxon>
        <taxon>Bacillota</taxon>
        <taxon>Clostridia</taxon>
        <taxon>Eubacteriales</taxon>
        <taxon>Clostridiaceae</taxon>
        <taxon>Clostridium</taxon>
    </lineage>
</organism>
<feature type="chain" id="PRO_0000205528" description="Putative RNA polymerase sigma-54 factor">
    <location>
        <begin position="1"/>
        <end position="453"/>
    </location>
</feature>
<feature type="DNA-binding region" description="H-T-H motif" evidence="1">
    <location>
        <begin position="342"/>
        <end position="361"/>
    </location>
</feature>
<feature type="short sequence motif" description="RPON box" evidence="1">
    <location>
        <begin position="431"/>
        <end position="439"/>
    </location>
</feature>
<dbReference type="EMBL" id="CP000673">
    <property type="protein sequence ID" value="EDK35021.1"/>
    <property type="molecule type" value="Genomic_DNA"/>
</dbReference>
<dbReference type="EMBL" id="L21902">
    <property type="protein sequence ID" value="AAA92349.1"/>
    <property type="molecule type" value="Genomic_DNA"/>
</dbReference>
<dbReference type="SMR" id="P38944"/>
<dbReference type="STRING" id="431943.CKL_3013"/>
<dbReference type="KEGG" id="ckl:CKL_3013"/>
<dbReference type="eggNOG" id="COG1508">
    <property type="taxonomic scope" value="Bacteria"/>
</dbReference>
<dbReference type="HOGENOM" id="CLU_020569_1_1_9"/>
<dbReference type="Proteomes" id="UP000002411">
    <property type="component" value="Chromosome"/>
</dbReference>
<dbReference type="GO" id="GO:0000428">
    <property type="term" value="C:DNA-directed RNA polymerase complex"/>
    <property type="evidence" value="ECO:0007669"/>
    <property type="project" value="UniProtKB-KW"/>
</dbReference>
<dbReference type="GO" id="GO:0003677">
    <property type="term" value="F:DNA binding"/>
    <property type="evidence" value="ECO:0007669"/>
    <property type="project" value="UniProtKB-KW"/>
</dbReference>
<dbReference type="GO" id="GO:0001216">
    <property type="term" value="F:DNA-binding transcription activator activity"/>
    <property type="evidence" value="ECO:0007669"/>
    <property type="project" value="InterPro"/>
</dbReference>
<dbReference type="GO" id="GO:0016779">
    <property type="term" value="F:nucleotidyltransferase activity"/>
    <property type="evidence" value="ECO:0007669"/>
    <property type="project" value="UniProtKB-KW"/>
</dbReference>
<dbReference type="GO" id="GO:0016987">
    <property type="term" value="F:sigma factor activity"/>
    <property type="evidence" value="ECO:0007669"/>
    <property type="project" value="UniProtKB-KW"/>
</dbReference>
<dbReference type="GO" id="GO:0006352">
    <property type="term" value="P:DNA-templated transcription initiation"/>
    <property type="evidence" value="ECO:0007669"/>
    <property type="project" value="InterPro"/>
</dbReference>
<dbReference type="Gene3D" id="1.10.10.60">
    <property type="entry name" value="Homeodomain-like"/>
    <property type="match status" value="1"/>
</dbReference>
<dbReference type="Gene3D" id="1.10.10.1330">
    <property type="entry name" value="RNA polymerase sigma-54 factor, core-binding domain"/>
    <property type="match status" value="1"/>
</dbReference>
<dbReference type="InterPro" id="IPR000394">
    <property type="entry name" value="RNA_pol_sigma_54"/>
</dbReference>
<dbReference type="InterPro" id="IPR007046">
    <property type="entry name" value="RNA_pol_sigma_54_core-bd"/>
</dbReference>
<dbReference type="InterPro" id="IPR007634">
    <property type="entry name" value="RNA_pol_sigma_54_DNA-bd"/>
</dbReference>
<dbReference type="InterPro" id="IPR038709">
    <property type="entry name" value="RpoN_core-bd_sf"/>
</dbReference>
<dbReference type="NCBIfam" id="TIGR02395">
    <property type="entry name" value="rpoN_sigma"/>
    <property type="match status" value="1"/>
</dbReference>
<dbReference type="PANTHER" id="PTHR32248">
    <property type="entry name" value="RNA POLYMERASE SIGMA-54 FACTOR"/>
    <property type="match status" value="1"/>
</dbReference>
<dbReference type="PANTHER" id="PTHR32248:SF4">
    <property type="entry name" value="RNA POLYMERASE SIGMA-54 FACTOR"/>
    <property type="match status" value="1"/>
</dbReference>
<dbReference type="Pfam" id="PF00309">
    <property type="entry name" value="Sigma54_AID"/>
    <property type="match status" value="1"/>
</dbReference>
<dbReference type="Pfam" id="PF04963">
    <property type="entry name" value="Sigma54_CBD"/>
    <property type="match status" value="1"/>
</dbReference>
<dbReference type="Pfam" id="PF04552">
    <property type="entry name" value="Sigma54_DBD"/>
    <property type="match status" value="1"/>
</dbReference>
<dbReference type="PIRSF" id="PIRSF000774">
    <property type="entry name" value="RpoN"/>
    <property type="match status" value="1"/>
</dbReference>
<dbReference type="PRINTS" id="PR00045">
    <property type="entry name" value="SIGMA54FCT"/>
</dbReference>
<dbReference type="PROSITE" id="PS00717">
    <property type="entry name" value="SIGMA54_1"/>
    <property type="match status" value="1"/>
</dbReference>
<dbReference type="PROSITE" id="PS00718">
    <property type="entry name" value="SIGMA54_2"/>
    <property type="match status" value="1"/>
</dbReference>
<dbReference type="PROSITE" id="PS50044">
    <property type="entry name" value="SIGMA54_3"/>
    <property type="match status" value="1"/>
</dbReference>
<sequence>MDFALNLTQEQRLAMTQEMQLSIKLLQMSSFELQEYVEKELQENPVLDIKESNVDKVEKDKLEYKEIIKNLDFDNYSHHSYDRNPDEEVSPFNFISEEKSLKEYLKDQIRDLDENQCIKTICLYIIENIDDRGYLILENEEIEEELKISKELAAYCVDLIHSLEPHGIGARNLAECLKIQIKQKDMDEENIFIMIDKYLEFIAENKYNVIAKELNIDVKQAQEYGDLIKTLSPKPSRGFYTGESVRYISPDAYIKKIDSEYFIIMNDDLTPRLTINAIYKDIINNDTDKDAVSYVKEKLNSALFLIKSIQHRKSTIYRVLEKIVEIQKDYFDYGESYLKPMTLKEIASSMDMHESTVSRAIRDKYIHINRGIVKIKDLFTTGMAASFSEENVSSLIIKNSIKKMIDNEDRKKPLSDQKICDLINEEGMNISRRTVAKYREEMGIKSSKGRKRF</sequence>
<gene>
    <name type="primary">rpoN</name>
    <name type="synonym">sigL</name>
    <name type="ordered locus">CKL_3013</name>
</gene>
<protein>
    <recommendedName>
        <fullName>Putative RNA polymerase sigma-54 factor</fullName>
    </recommendedName>
</protein>